<reference key="1">
    <citation type="journal article" date="2009" name="J. Bacteriol.">
        <title>Complete genome sequence of Macrococcus caseolyticus strain JCSCS5402, reflecting the ancestral genome of the human-pathogenic staphylococci.</title>
        <authorList>
            <person name="Baba T."/>
            <person name="Kuwahara-Arai K."/>
            <person name="Uchiyama I."/>
            <person name="Takeuchi F."/>
            <person name="Ito T."/>
            <person name="Hiramatsu K."/>
        </authorList>
    </citation>
    <scope>NUCLEOTIDE SEQUENCE [LARGE SCALE GENOMIC DNA]</scope>
    <source>
        <strain>JCSC5402</strain>
    </source>
</reference>
<keyword id="KW-0963">Cytoplasm</keyword>
<keyword id="KW-0227">DNA damage</keyword>
<keyword id="KW-0233">DNA recombination</keyword>
<keyword id="KW-0234">DNA repair</keyword>
<keyword id="KW-0238">DNA-binding</keyword>
<keyword id="KW-1185">Reference proteome</keyword>
<name>RUVA_MACCJ</name>
<feature type="chain" id="PRO_1000195155" description="Holliday junction branch migration complex subunit RuvA">
    <location>
        <begin position="1"/>
        <end position="193"/>
    </location>
</feature>
<feature type="region of interest" description="Domain I" evidence="1">
    <location>
        <begin position="1"/>
        <end position="63"/>
    </location>
</feature>
<feature type="region of interest" description="Domain II" evidence="1">
    <location>
        <begin position="64"/>
        <end position="141"/>
    </location>
</feature>
<feature type="region of interest" description="Flexible linker" evidence="1">
    <location>
        <begin position="141"/>
        <end position="142"/>
    </location>
</feature>
<feature type="region of interest" description="Domain III" evidence="1">
    <location>
        <begin position="143"/>
        <end position="193"/>
    </location>
</feature>
<evidence type="ECO:0000255" key="1">
    <source>
        <dbReference type="HAMAP-Rule" id="MF_00031"/>
    </source>
</evidence>
<comment type="function">
    <text evidence="1">The RuvA-RuvB-RuvC complex processes Holliday junction (HJ) DNA during genetic recombination and DNA repair, while the RuvA-RuvB complex plays an important role in the rescue of blocked DNA replication forks via replication fork reversal (RFR). RuvA specifically binds to HJ cruciform DNA, conferring on it an open structure. The RuvB hexamer acts as an ATP-dependent pump, pulling dsDNA into and through the RuvAB complex. HJ branch migration allows RuvC to scan DNA until it finds its consensus sequence, where it cleaves and resolves the cruciform DNA.</text>
</comment>
<comment type="subunit">
    <text evidence="1">Homotetramer. Forms an RuvA(8)-RuvB(12)-Holliday junction (HJ) complex. HJ DNA is sandwiched between 2 RuvA tetramers; dsDNA enters through RuvA and exits via RuvB. An RuvB hexamer assembles on each DNA strand where it exits the tetramer. Each RuvB hexamer is contacted by two RuvA subunits (via domain III) on 2 adjacent RuvB subunits; this complex drives branch migration. In the full resolvosome a probable DNA-RuvA(4)-RuvB(12)-RuvC(2) complex forms which resolves the HJ.</text>
</comment>
<comment type="subcellular location">
    <subcellularLocation>
        <location evidence="1">Cytoplasm</location>
    </subcellularLocation>
</comment>
<comment type="domain">
    <text evidence="1">Has three domains with a flexible linker between the domains II and III and assumes an 'L' shape. Domain III is highly mobile and contacts RuvB.</text>
</comment>
<comment type="similarity">
    <text evidence="1">Belongs to the RuvA family.</text>
</comment>
<gene>
    <name evidence="1" type="primary">ruvA</name>
    <name type="ordered locus">MCCL_1280</name>
</gene>
<accession>B9E719</accession>
<proteinExistence type="inferred from homology"/>
<protein>
    <recommendedName>
        <fullName evidence="1">Holliday junction branch migration complex subunit RuvA</fullName>
    </recommendedName>
</protein>
<dbReference type="EMBL" id="AP009484">
    <property type="protein sequence ID" value="BAH17987.1"/>
    <property type="molecule type" value="Genomic_DNA"/>
</dbReference>
<dbReference type="RefSeq" id="WP_012657185.1">
    <property type="nucleotide sequence ID" value="NC_011999.1"/>
</dbReference>
<dbReference type="SMR" id="B9E719"/>
<dbReference type="STRING" id="458233.MCCL_1280"/>
<dbReference type="GeneID" id="61128821"/>
<dbReference type="KEGG" id="mcl:MCCL_1280"/>
<dbReference type="eggNOG" id="COG0632">
    <property type="taxonomic scope" value="Bacteria"/>
</dbReference>
<dbReference type="HOGENOM" id="CLU_087936_1_0_9"/>
<dbReference type="OrthoDB" id="5293449at2"/>
<dbReference type="Proteomes" id="UP000001383">
    <property type="component" value="Chromosome"/>
</dbReference>
<dbReference type="GO" id="GO:0005737">
    <property type="term" value="C:cytoplasm"/>
    <property type="evidence" value="ECO:0007669"/>
    <property type="project" value="UniProtKB-SubCell"/>
</dbReference>
<dbReference type="GO" id="GO:0009379">
    <property type="term" value="C:Holliday junction helicase complex"/>
    <property type="evidence" value="ECO:0007669"/>
    <property type="project" value="InterPro"/>
</dbReference>
<dbReference type="GO" id="GO:0048476">
    <property type="term" value="C:Holliday junction resolvase complex"/>
    <property type="evidence" value="ECO:0007669"/>
    <property type="project" value="UniProtKB-UniRule"/>
</dbReference>
<dbReference type="GO" id="GO:0005524">
    <property type="term" value="F:ATP binding"/>
    <property type="evidence" value="ECO:0007669"/>
    <property type="project" value="InterPro"/>
</dbReference>
<dbReference type="GO" id="GO:0000400">
    <property type="term" value="F:four-way junction DNA binding"/>
    <property type="evidence" value="ECO:0007669"/>
    <property type="project" value="UniProtKB-UniRule"/>
</dbReference>
<dbReference type="GO" id="GO:0009378">
    <property type="term" value="F:four-way junction helicase activity"/>
    <property type="evidence" value="ECO:0007669"/>
    <property type="project" value="InterPro"/>
</dbReference>
<dbReference type="GO" id="GO:0006310">
    <property type="term" value="P:DNA recombination"/>
    <property type="evidence" value="ECO:0007669"/>
    <property type="project" value="UniProtKB-UniRule"/>
</dbReference>
<dbReference type="GO" id="GO:0006281">
    <property type="term" value="P:DNA repair"/>
    <property type="evidence" value="ECO:0007669"/>
    <property type="project" value="UniProtKB-UniRule"/>
</dbReference>
<dbReference type="CDD" id="cd14332">
    <property type="entry name" value="UBA_RuvA_C"/>
    <property type="match status" value="1"/>
</dbReference>
<dbReference type="Gene3D" id="1.10.150.20">
    <property type="entry name" value="5' to 3' exonuclease, C-terminal subdomain"/>
    <property type="match status" value="1"/>
</dbReference>
<dbReference type="Gene3D" id="2.40.50.140">
    <property type="entry name" value="Nucleic acid-binding proteins"/>
    <property type="match status" value="1"/>
</dbReference>
<dbReference type="HAMAP" id="MF_00031">
    <property type="entry name" value="DNA_HJ_migration_RuvA"/>
    <property type="match status" value="1"/>
</dbReference>
<dbReference type="InterPro" id="IPR013849">
    <property type="entry name" value="DNA_helicase_Holl-junc_RuvA_I"/>
</dbReference>
<dbReference type="InterPro" id="IPR003583">
    <property type="entry name" value="Hlx-hairpin-Hlx_DNA-bd_motif"/>
</dbReference>
<dbReference type="InterPro" id="IPR012340">
    <property type="entry name" value="NA-bd_OB-fold"/>
</dbReference>
<dbReference type="InterPro" id="IPR000085">
    <property type="entry name" value="RuvA"/>
</dbReference>
<dbReference type="InterPro" id="IPR010994">
    <property type="entry name" value="RuvA_2-like"/>
</dbReference>
<dbReference type="InterPro" id="IPR011114">
    <property type="entry name" value="RuvA_C"/>
</dbReference>
<dbReference type="InterPro" id="IPR036267">
    <property type="entry name" value="RuvA_C_sf"/>
</dbReference>
<dbReference type="NCBIfam" id="TIGR00084">
    <property type="entry name" value="ruvA"/>
    <property type="match status" value="1"/>
</dbReference>
<dbReference type="Pfam" id="PF14520">
    <property type="entry name" value="HHH_5"/>
    <property type="match status" value="1"/>
</dbReference>
<dbReference type="Pfam" id="PF07499">
    <property type="entry name" value="RuvA_C"/>
    <property type="match status" value="1"/>
</dbReference>
<dbReference type="Pfam" id="PF01330">
    <property type="entry name" value="RuvA_N"/>
    <property type="match status" value="1"/>
</dbReference>
<dbReference type="SMART" id="SM00278">
    <property type="entry name" value="HhH1"/>
    <property type="match status" value="2"/>
</dbReference>
<dbReference type="SUPFAM" id="SSF46929">
    <property type="entry name" value="DNA helicase RuvA subunit, C-terminal domain"/>
    <property type="match status" value="1"/>
</dbReference>
<dbReference type="SUPFAM" id="SSF50249">
    <property type="entry name" value="Nucleic acid-binding proteins"/>
    <property type="match status" value="1"/>
</dbReference>
<dbReference type="SUPFAM" id="SSF47781">
    <property type="entry name" value="RuvA domain 2-like"/>
    <property type="match status" value="1"/>
</dbReference>
<sequence>MYAYLKGKIMTILPTHLVIEVSGIGYECLTPNPYRFNHQLDQMITLHTQLVVREDAQLLYGFKDEEEKAMFNALNKVTGIGPKSALAILATSTPQEIIKAIESESESYLIKFPGIGKKTARQIILDLKGKLTITDESELFKEVNDTLLNEALLAFEALGYSKREITKIEKELKKKQFSTVDEYVKQGLQMFVS</sequence>
<organism>
    <name type="scientific">Macrococcus caseolyticus (strain JCSC5402)</name>
    <name type="common">Macrococcoides caseolyticum</name>
    <dbReference type="NCBI Taxonomy" id="458233"/>
    <lineage>
        <taxon>Bacteria</taxon>
        <taxon>Bacillati</taxon>
        <taxon>Bacillota</taxon>
        <taxon>Bacilli</taxon>
        <taxon>Bacillales</taxon>
        <taxon>Staphylococcaceae</taxon>
        <taxon>Macrococcoides</taxon>
    </lineage>
</organism>